<gene>
    <name evidence="1" type="primary">frr</name>
    <name type="ordered locus">Fphi_0595</name>
</gene>
<name>RRF_FRAP2</name>
<sequence>MINDILKDAENRMSKTLEVLADDLAKIRTGRAHPDILAHVTIDYYGSATPITQVANVTVLDARTLGITPWEKGLAGKIEKAIITSDLGLNPTNLGDSLRVPMPALNEERRKELVKLVKSETESGRVSIRNIRRDANGDIKELLKEKEITEDEAKRAEDNIQKITDKMIAQADALAVKKEQDLMVV</sequence>
<evidence type="ECO:0000255" key="1">
    <source>
        <dbReference type="HAMAP-Rule" id="MF_00040"/>
    </source>
</evidence>
<organism>
    <name type="scientific">Francisella philomiragia subsp. philomiragia (strain ATCC 25017 / CCUG 19701 / FSC 153 / O#319-036)</name>
    <dbReference type="NCBI Taxonomy" id="484022"/>
    <lineage>
        <taxon>Bacteria</taxon>
        <taxon>Pseudomonadati</taxon>
        <taxon>Pseudomonadota</taxon>
        <taxon>Gammaproteobacteria</taxon>
        <taxon>Thiotrichales</taxon>
        <taxon>Francisellaceae</taxon>
        <taxon>Francisella</taxon>
    </lineage>
</organism>
<keyword id="KW-0963">Cytoplasm</keyword>
<keyword id="KW-0648">Protein biosynthesis</keyword>
<protein>
    <recommendedName>
        <fullName evidence="1">Ribosome-recycling factor</fullName>
        <shortName evidence="1">RRF</shortName>
    </recommendedName>
    <alternativeName>
        <fullName evidence="1">Ribosome-releasing factor</fullName>
    </alternativeName>
</protein>
<dbReference type="EMBL" id="CP000937">
    <property type="protein sequence ID" value="ABZ86814.1"/>
    <property type="molecule type" value="Genomic_DNA"/>
</dbReference>
<dbReference type="SMR" id="B0U0Z8"/>
<dbReference type="KEGG" id="fph:Fphi_0595"/>
<dbReference type="eggNOG" id="COG0233">
    <property type="taxonomic scope" value="Bacteria"/>
</dbReference>
<dbReference type="HOGENOM" id="CLU_073981_2_0_6"/>
<dbReference type="GO" id="GO:0005829">
    <property type="term" value="C:cytosol"/>
    <property type="evidence" value="ECO:0007669"/>
    <property type="project" value="GOC"/>
</dbReference>
<dbReference type="GO" id="GO:0043023">
    <property type="term" value="F:ribosomal large subunit binding"/>
    <property type="evidence" value="ECO:0007669"/>
    <property type="project" value="TreeGrafter"/>
</dbReference>
<dbReference type="GO" id="GO:0002184">
    <property type="term" value="P:cytoplasmic translational termination"/>
    <property type="evidence" value="ECO:0007669"/>
    <property type="project" value="TreeGrafter"/>
</dbReference>
<dbReference type="CDD" id="cd00520">
    <property type="entry name" value="RRF"/>
    <property type="match status" value="1"/>
</dbReference>
<dbReference type="FunFam" id="1.10.132.20:FF:000001">
    <property type="entry name" value="Ribosome-recycling factor"/>
    <property type="match status" value="1"/>
</dbReference>
<dbReference type="FunFam" id="3.30.1360.40:FF:000001">
    <property type="entry name" value="Ribosome-recycling factor"/>
    <property type="match status" value="1"/>
</dbReference>
<dbReference type="Gene3D" id="3.30.1360.40">
    <property type="match status" value="1"/>
</dbReference>
<dbReference type="Gene3D" id="1.10.132.20">
    <property type="entry name" value="Ribosome-recycling factor"/>
    <property type="match status" value="1"/>
</dbReference>
<dbReference type="HAMAP" id="MF_00040">
    <property type="entry name" value="RRF"/>
    <property type="match status" value="1"/>
</dbReference>
<dbReference type="InterPro" id="IPR002661">
    <property type="entry name" value="Ribosome_recyc_fac"/>
</dbReference>
<dbReference type="InterPro" id="IPR023584">
    <property type="entry name" value="Ribosome_recyc_fac_dom"/>
</dbReference>
<dbReference type="InterPro" id="IPR036191">
    <property type="entry name" value="RRF_sf"/>
</dbReference>
<dbReference type="NCBIfam" id="TIGR00496">
    <property type="entry name" value="frr"/>
    <property type="match status" value="1"/>
</dbReference>
<dbReference type="PANTHER" id="PTHR20982:SF3">
    <property type="entry name" value="MITOCHONDRIAL RIBOSOME RECYCLING FACTOR PSEUDO 1"/>
    <property type="match status" value="1"/>
</dbReference>
<dbReference type="PANTHER" id="PTHR20982">
    <property type="entry name" value="RIBOSOME RECYCLING FACTOR"/>
    <property type="match status" value="1"/>
</dbReference>
<dbReference type="Pfam" id="PF01765">
    <property type="entry name" value="RRF"/>
    <property type="match status" value="1"/>
</dbReference>
<dbReference type="SUPFAM" id="SSF55194">
    <property type="entry name" value="Ribosome recycling factor, RRF"/>
    <property type="match status" value="1"/>
</dbReference>
<reference key="1">
    <citation type="submission" date="2007-12" db="EMBL/GenBank/DDBJ databases">
        <title>Complete sequence of chromosome of Francisella philomiragia subsp. philomiragia ATCC 25017.</title>
        <authorList>
            <consortium name="US DOE Joint Genome Institute"/>
            <person name="Copeland A."/>
            <person name="Lucas S."/>
            <person name="Lapidus A."/>
            <person name="Barry K."/>
            <person name="Detter J.C."/>
            <person name="Glavina del Rio T."/>
            <person name="Hammon N."/>
            <person name="Israni S."/>
            <person name="Dalin E."/>
            <person name="Tice H."/>
            <person name="Pitluck S."/>
            <person name="Chain P."/>
            <person name="Malfatti S."/>
            <person name="Shin M."/>
            <person name="Vergez L."/>
            <person name="Schmutz J."/>
            <person name="Larimer F."/>
            <person name="Land M."/>
            <person name="Hauser L."/>
            <person name="Richardson P."/>
        </authorList>
    </citation>
    <scope>NUCLEOTIDE SEQUENCE [LARGE SCALE GENOMIC DNA]</scope>
    <source>
        <strain>ATCC 25017 / CCUG 19701 / FSC 153 / O#319-036</strain>
    </source>
</reference>
<proteinExistence type="inferred from homology"/>
<feature type="chain" id="PRO_1000074580" description="Ribosome-recycling factor">
    <location>
        <begin position="1"/>
        <end position="185"/>
    </location>
</feature>
<accession>B0U0Z8</accession>
<comment type="function">
    <text evidence="1">Responsible for the release of ribosomes from messenger RNA at the termination of protein biosynthesis. May increase the efficiency of translation by recycling ribosomes from one round of translation to another.</text>
</comment>
<comment type="subcellular location">
    <subcellularLocation>
        <location evidence="1">Cytoplasm</location>
    </subcellularLocation>
</comment>
<comment type="similarity">
    <text evidence="1">Belongs to the RRF family.</text>
</comment>